<organism>
    <name type="scientific">Escherichia coli (strain SMS-3-5 / SECEC)</name>
    <dbReference type="NCBI Taxonomy" id="439855"/>
    <lineage>
        <taxon>Bacteria</taxon>
        <taxon>Pseudomonadati</taxon>
        <taxon>Pseudomonadota</taxon>
        <taxon>Gammaproteobacteria</taxon>
        <taxon>Enterobacterales</taxon>
        <taxon>Enterobacteriaceae</taxon>
        <taxon>Escherichia</taxon>
    </lineage>
</organism>
<sequence length="416" mass="45828">MSTPLQGIKVLDFTGVQSGPSCTQMLAWFGADVIKIERPGVGDVTRHQLRDIPDIDALYFTMLNSNKRSIELNTKTAEGKEVMEKLIREADILVENFHPGAIDHMGFTWEHIQEINPRLIFGSIKGFDECSPYVNVKAYENVAQAAGGAASTTGFWDGPPLVSAAALGDSNTGMHLLIGLLAALLHREKTGRGQRVTMSMQDAVLNLCRVKLRDQQRLDKLGYLEEYPQYPNGTFGDAVPRGGNAGGGGQPGWILKCKGWETDPNAYIYFTIQEQNWENTCKAIGKPEWITDPAYSTAHARQPHIFDIFAEIEKYTVTIDKHEAVAYLTQFDIPCAPVLSMKEISLDPSLRQSGSVVEVEQPLRGKYLTVGCPMKFSAFTPDIKAAPLLGEHTAAVLQELGYSDDEIAAMKQNHAI</sequence>
<proteinExistence type="inferred from homology"/>
<dbReference type="EC" id="2.8.3.16" evidence="2"/>
<dbReference type="EMBL" id="CP000970">
    <property type="protein sequence ID" value="ACB17898.1"/>
    <property type="molecule type" value="Genomic_DNA"/>
</dbReference>
<dbReference type="RefSeq" id="WP_000106759.1">
    <property type="nucleotide sequence ID" value="NC_010498.1"/>
</dbReference>
<dbReference type="SMR" id="B1LMH0"/>
<dbReference type="GeneID" id="75202557"/>
<dbReference type="KEGG" id="ecm:EcSMS35_2524"/>
<dbReference type="HOGENOM" id="CLU_033975_2_1_6"/>
<dbReference type="UniPathway" id="UPA00540">
    <property type="reaction ID" value="UER00598"/>
</dbReference>
<dbReference type="Proteomes" id="UP000007011">
    <property type="component" value="Chromosome"/>
</dbReference>
<dbReference type="GO" id="GO:0033608">
    <property type="term" value="F:formyl-CoA transferase activity"/>
    <property type="evidence" value="ECO:0007669"/>
    <property type="project" value="UniProtKB-EC"/>
</dbReference>
<dbReference type="GO" id="GO:0033611">
    <property type="term" value="P:oxalate catabolic process"/>
    <property type="evidence" value="ECO:0007669"/>
    <property type="project" value="UniProtKB-UniRule"/>
</dbReference>
<dbReference type="Gene3D" id="3.40.50.10540">
    <property type="entry name" value="Crotonobetainyl-coa:carnitine coa-transferase, domain 1"/>
    <property type="match status" value="1"/>
</dbReference>
<dbReference type="Gene3D" id="3.30.1540.10">
    <property type="entry name" value="formyl-coa transferase, domain 3"/>
    <property type="match status" value="1"/>
</dbReference>
<dbReference type="HAMAP" id="MF_00742">
    <property type="entry name" value="Formyl_CoA_transfer"/>
    <property type="match status" value="1"/>
</dbReference>
<dbReference type="InterPro" id="IPR050483">
    <property type="entry name" value="CoA-transferase_III_domain"/>
</dbReference>
<dbReference type="InterPro" id="IPR003673">
    <property type="entry name" value="CoA-Trfase_fam_III"/>
</dbReference>
<dbReference type="InterPro" id="IPR044855">
    <property type="entry name" value="CoA-Trfase_III_dom3_sf"/>
</dbReference>
<dbReference type="InterPro" id="IPR023606">
    <property type="entry name" value="CoA-Trfase_III_dom_1_sf"/>
</dbReference>
<dbReference type="InterPro" id="IPR017659">
    <property type="entry name" value="Formyl_CoA_transfer"/>
</dbReference>
<dbReference type="NCBIfam" id="TIGR03253">
    <property type="entry name" value="oxalate_frc"/>
    <property type="match status" value="1"/>
</dbReference>
<dbReference type="NCBIfam" id="NF003809">
    <property type="entry name" value="PRK05398.1"/>
    <property type="match status" value="1"/>
</dbReference>
<dbReference type="PANTHER" id="PTHR48207">
    <property type="entry name" value="SUCCINATE--HYDROXYMETHYLGLUTARATE COA-TRANSFERASE"/>
    <property type="match status" value="1"/>
</dbReference>
<dbReference type="PANTHER" id="PTHR48207:SF3">
    <property type="entry name" value="SUCCINATE--HYDROXYMETHYLGLUTARATE COA-TRANSFERASE"/>
    <property type="match status" value="1"/>
</dbReference>
<dbReference type="Pfam" id="PF02515">
    <property type="entry name" value="CoA_transf_3"/>
    <property type="match status" value="1"/>
</dbReference>
<dbReference type="SUPFAM" id="SSF89796">
    <property type="entry name" value="CoA-transferase family III (CaiB/BaiF)"/>
    <property type="match status" value="1"/>
</dbReference>
<accession>B1LMH0</accession>
<gene>
    <name evidence="2" type="primary">frc</name>
    <name type="ordered locus">EcSMS35_2524</name>
</gene>
<comment type="function">
    <text evidence="1">Involved in the catabolism of oxalate and in the adapatation to low pH via the induction of the oxalate-dependent acid tolerance response (ATR). Catalyzes the transfer of the CoA moiety from formyl-CoA to oxalate (By similarity).</text>
</comment>
<comment type="catalytic activity">
    <reaction evidence="2">
        <text>formyl-CoA + oxalate = oxalyl-CoA + formate</text>
        <dbReference type="Rhea" id="RHEA:16545"/>
        <dbReference type="ChEBI" id="CHEBI:15740"/>
        <dbReference type="ChEBI" id="CHEBI:30623"/>
        <dbReference type="ChEBI" id="CHEBI:57376"/>
        <dbReference type="ChEBI" id="CHEBI:57388"/>
        <dbReference type="EC" id="2.8.3.16"/>
    </reaction>
</comment>
<comment type="pathway">
    <text evidence="2">Metabolic intermediate degradation; oxalate degradation; CO(2) and formate from oxalate: step 1/2.</text>
</comment>
<comment type="subunit">
    <text evidence="2">Homodimer.</text>
</comment>
<comment type="similarity">
    <text evidence="2">Belongs to the CoA-transferase III family. Frc subfamily.</text>
</comment>
<keyword id="KW-0808">Transferase</keyword>
<name>FCTA_ECOSM</name>
<feature type="chain" id="PRO_1000189580" description="Formyl-CoA:oxalate CoA-transferase">
    <location>
        <begin position="1"/>
        <end position="416"/>
    </location>
</feature>
<feature type="active site" description="Nucleophile" evidence="2">
    <location>
        <position position="169"/>
    </location>
</feature>
<feature type="binding site" evidence="1">
    <location>
        <begin position="17"/>
        <end position="18"/>
    </location>
    <ligand>
        <name>CoA</name>
        <dbReference type="ChEBI" id="CHEBI:57287"/>
    </ligand>
</feature>
<feature type="binding site" evidence="2">
    <location>
        <position position="38"/>
    </location>
    <ligand>
        <name>CoA</name>
        <dbReference type="ChEBI" id="CHEBI:57287"/>
    </ligand>
</feature>
<feature type="binding site" evidence="1">
    <location>
        <begin position="72"/>
        <end position="75"/>
    </location>
    <ligand>
        <name>CoA</name>
        <dbReference type="ChEBI" id="CHEBI:57287"/>
    </ligand>
</feature>
<feature type="binding site" evidence="1">
    <location>
        <begin position="96"/>
        <end position="98"/>
    </location>
    <ligand>
        <name>CoA</name>
        <dbReference type="ChEBI" id="CHEBI:57287"/>
    </ligand>
</feature>
<feature type="binding site" evidence="2">
    <location>
        <position position="104"/>
    </location>
    <ligand>
        <name>CoA</name>
        <dbReference type="ChEBI" id="CHEBI:57287"/>
    </ligand>
</feature>
<feature type="binding site" evidence="1">
    <location>
        <begin position="137"/>
        <end position="140"/>
    </location>
    <ligand>
        <name>CoA</name>
        <dbReference type="ChEBI" id="CHEBI:57287"/>
    </ligand>
</feature>
<feature type="binding site" evidence="1">
    <location>
        <begin position="248"/>
        <end position="250"/>
    </location>
    <ligand>
        <name>substrate</name>
    </ligand>
</feature>
<feature type="binding site" evidence="1">
    <location>
        <begin position="273"/>
        <end position="275"/>
    </location>
    <ligand>
        <name>CoA</name>
        <dbReference type="ChEBI" id="CHEBI:57287"/>
    </ligand>
</feature>
<reference key="1">
    <citation type="journal article" date="2008" name="J. Bacteriol.">
        <title>Insights into the environmental resistance gene pool from the genome sequence of the multidrug-resistant environmental isolate Escherichia coli SMS-3-5.</title>
        <authorList>
            <person name="Fricke W.F."/>
            <person name="Wright M.S."/>
            <person name="Lindell A.H."/>
            <person name="Harkins D.M."/>
            <person name="Baker-Austin C."/>
            <person name="Ravel J."/>
            <person name="Stepanauskas R."/>
        </authorList>
    </citation>
    <scope>NUCLEOTIDE SEQUENCE [LARGE SCALE GENOMIC DNA]</scope>
    <source>
        <strain>SMS-3-5 / SECEC</strain>
    </source>
</reference>
<protein>
    <recommendedName>
        <fullName>Formyl-CoA:oxalate CoA-transferase</fullName>
        <shortName>FCOCT</shortName>
        <ecNumber evidence="2">2.8.3.16</ecNumber>
    </recommendedName>
    <alternativeName>
        <fullName evidence="2">Formyl-coenzyme A transferase</fullName>
        <shortName evidence="2">Formyl-CoA transferase</shortName>
    </alternativeName>
</protein>
<evidence type="ECO:0000250" key="1"/>
<evidence type="ECO:0000255" key="2">
    <source>
        <dbReference type="HAMAP-Rule" id="MF_00742"/>
    </source>
</evidence>